<proteinExistence type="inferred from homology"/>
<protein>
    <recommendedName>
        <fullName>Major cold shock protein</fullName>
    </recommendedName>
</protein>
<sequence length="67" mass="7322">MAQGTVKWFNAEKGFGFISTENGQDVFAHFSAIQTNGFKTLEEGQKVAFDVEEGQRGPQAVNITKLA</sequence>
<reference key="1">
    <citation type="journal article" date="2003" name="Genome Res.">
        <title>Genome sequence of an M3 strain of Streptococcus pyogenes reveals a large-scale genomic rearrangement in invasive strains and new insights into phage evolution.</title>
        <authorList>
            <person name="Nakagawa I."/>
            <person name="Kurokawa K."/>
            <person name="Yamashita A."/>
            <person name="Nakata M."/>
            <person name="Tomiyasu Y."/>
            <person name="Okahashi N."/>
            <person name="Kawabata S."/>
            <person name="Yamazaki K."/>
            <person name="Shiba T."/>
            <person name="Yasunaga T."/>
            <person name="Hayashi H."/>
            <person name="Hattori M."/>
            <person name="Hamada S."/>
        </authorList>
    </citation>
    <scope>NUCLEOTIDE SEQUENCE [LARGE SCALE GENOMIC DNA]</scope>
    <source>
        <strain>SSI-1</strain>
    </source>
</reference>
<organism>
    <name type="scientific">Streptococcus pyogenes serotype M3 (strain SSI-1)</name>
    <dbReference type="NCBI Taxonomy" id="193567"/>
    <lineage>
        <taxon>Bacteria</taxon>
        <taxon>Bacillati</taxon>
        <taxon>Bacillota</taxon>
        <taxon>Bacilli</taxon>
        <taxon>Lactobacillales</taxon>
        <taxon>Streptococcaceae</taxon>
        <taxon>Streptococcus</taxon>
    </lineage>
</organism>
<keyword id="KW-0010">Activator</keyword>
<keyword id="KW-0963">Cytoplasm</keyword>
<keyword id="KW-0238">DNA-binding</keyword>
<keyword id="KW-0346">Stress response</keyword>
<keyword id="KW-0804">Transcription</keyword>
<keyword id="KW-0805">Transcription regulation</keyword>
<accession>P0DA49</accession>
<accession>P0A360</accession>
<accession>Q54974</accession>
<gene>
    <name type="primary">cspA</name>
    <name type="synonym">csp</name>
    <name type="synonym">cspC</name>
    <name type="ordered locus">SPs1766</name>
</gene>
<comment type="subunit">
    <text evidence="1">Homodimer.</text>
</comment>
<comment type="subcellular location">
    <subcellularLocation>
        <location evidence="1">Cytoplasm</location>
    </subcellularLocation>
</comment>
<comment type="induction">
    <text evidence="1">In response to low temperature.</text>
</comment>
<comment type="sequence caution" evidence="2">
    <conflict type="erroneous initiation">
        <sequence resource="EMBL-CDS" id="BAC64861"/>
    </conflict>
</comment>
<dbReference type="EMBL" id="BA000034">
    <property type="protein sequence ID" value="BAC64861.1"/>
    <property type="status" value="ALT_INIT"/>
    <property type="molecule type" value="Genomic_DNA"/>
</dbReference>
<dbReference type="RefSeq" id="WP_002991299.1">
    <property type="nucleotide sequence ID" value="NC_004606.1"/>
</dbReference>
<dbReference type="SMR" id="P0DA49"/>
<dbReference type="KEGG" id="sps:SPs1766"/>
<dbReference type="HOGENOM" id="CLU_117621_6_1_9"/>
<dbReference type="GO" id="GO:0005737">
    <property type="term" value="C:cytoplasm"/>
    <property type="evidence" value="ECO:0007669"/>
    <property type="project" value="UniProtKB-SubCell"/>
</dbReference>
<dbReference type="GO" id="GO:0003677">
    <property type="term" value="F:DNA binding"/>
    <property type="evidence" value="ECO:0007669"/>
    <property type="project" value="UniProtKB-KW"/>
</dbReference>
<dbReference type="CDD" id="cd04458">
    <property type="entry name" value="CSP_CDS"/>
    <property type="match status" value="1"/>
</dbReference>
<dbReference type="FunFam" id="2.40.50.140:FF:000006">
    <property type="entry name" value="Cold shock protein CspC"/>
    <property type="match status" value="1"/>
</dbReference>
<dbReference type="Gene3D" id="6.20.370.130">
    <property type="match status" value="1"/>
</dbReference>
<dbReference type="Gene3D" id="2.40.50.140">
    <property type="entry name" value="Nucleic acid-binding proteins"/>
    <property type="match status" value="1"/>
</dbReference>
<dbReference type="InterPro" id="IPR012156">
    <property type="entry name" value="Cold_shock_CspA"/>
</dbReference>
<dbReference type="InterPro" id="IPR050181">
    <property type="entry name" value="Cold_shock_domain"/>
</dbReference>
<dbReference type="InterPro" id="IPR011129">
    <property type="entry name" value="CSD"/>
</dbReference>
<dbReference type="InterPro" id="IPR019844">
    <property type="entry name" value="CSD_CS"/>
</dbReference>
<dbReference type="InterPro" id="IPR002059">
    <property type="entry name" value="CSP_DNA-bd"/>
</dbReference>
<dbReference type="InterPro" id="IPR012340">
    <property type="entry name" value="NA-bd_OB-fold"/>
</dbReference>
<dbReference type="PANTHER" id="PTHR11544">
    <property type="entry name" value="COLD SHOCK DOMAIN CONTAINING PROTEINS"/>
    <property type="match status" value="1"/>
</dbReference>
<dbReference type="Pfam" id="PF00313">
    <property type="entry name" value="CSD"/>
    <property type="match status" value="1"/>
</dbReference>
<dbReference type="PIRSF" id="PIRSF002599">
    <property type="entry name" value="Cold_shock_A"/>
    <property type="match status" value="1"/>
</dbReference>
<dbReference type="PRINTS" id="PR00050">
    <property type="entry name" value="COLDSHOCK"/>
</dbReference>
<dbReference type="SMART" id="SM00357">
    <property type="entry name" value="CSP"/>
    <property type="match status" value="1"/>
</dbReference>
<dbReference type="SUPFAM" id="SSF50249">
    <property type="entry name" value="Nucleic acid-binding proteins"/>
    <property type="match status" value="1"/>
</dbReference>
<dbReference type="PROSITE" id="PS00352">
    <property type="entry name" value="CSD_1"/>
    <property type="match status" value="1"/>
</dbReference>
<dbReference type="PROSITE" id="PS51857">
    <property type="entry name" value="CSD_2"/>
    <property type="match status" value="1"/>
</dbReference>
<evidence type="ECO:0000250" key="1"/>
<evidence type="ECO:0000305" key="2"/>
<feature type="chain" id="PRO_0000411312" description="Major cold shock protein">
    <location>
        <begin position="1"/>
        <end position="67"/>
    </location>
</feature>
<feature type="domain" description="CSD">
    <location>
        <begin position="4"/>
        <end position="63"/>
    </location>
</feature>
<name>CSPA_STRPQ</name>